<sequence>MLFKKDRKQETAYFSDSNGQQKNRIQLTNKHADVKKQLKMVRLGDAELYVLEQLQPLIQENIVNIVDAFYKNLDHESSLMDIINDHSSVDRLKQTLKRHIQEMFAGVIDDEFIEKRNRIASIHLRIGLLPKWYMGAFQELLLSMIDIYEASITNQQELLKAIKATTKILNLEQQLVLEAFQSEYNQTRDEQEEKKNLLHQKIQETSGSIANLFSETSRSVQELVDKSEGISQASKAGTVTSSTVEEKSIGGKKELEVQQKQMNKIDTSLVQIEKEMVKLDEIAQQIEKIFGIVTGIAEQTNLLSLNASIESARAGEHGKGFAVVANEVRKLSEDTKKTVSTVSELVNNTNTQINIVSKHIKDVNELVSESKEKMTQINRLFDEIVHSMKISKEQSGKIDVDLQAFLGGLQEVSRAVSHVAASVDSLVILTEE</sequence>
<proteinExistence type="evidence at protein level"/>
<evidence type="ECO:0000255" key="1">
    <source>
        <dbReference type="PROSITE-ProRule" id="PRU00284"/>
    </source>
</evidence>
<evidence type="ECO:0000269" key="2">
    <source>
    </source>
</evidence>
<evidence type="ECO:0000305" key="3"/>
<evidence type="ECO:0000305" key="4">
    <source>
    </source>
</evidence>
<evidence type="ECO:0007829" key="5">
    <source>
        <dbReference type="PDB" id="1OR4"/>
    </source>
</evidence>
<keyword id="KW-0002">3D-structure</keyword>
<keyword id="KW-0349">Heme</keyword>
<keyword id="KW-0408">Iron</keyword>
<keyword id="KW-0479">Metal-binding</keyword>
<keyword id="KW-1185">Reference proteome</keyword>
<keyword id="KW-0807">Transducer</keyword>
<dbReference type="EMBL" id="Y14084">
    <property type="protein sequence ID" value="CAA74545.1"/>
    <property type="molecule type" value="Genomic_DNA"/>
</dbReference>
<dbReference type="EMBL" id="AL009126">
    <property type="protein sequence ID" value="CAB12878.1"/>
    <property type="molecule type" value="Genomic_DNA"/>
</dbReference>
<dbReference type="PIR" id="C69832">
    <property type="entry name" value="C69832"/>
</dbReference>
<dbReference type="RefSeq" id="NP_388919.1">
    <property type="nucleotide sequence ID" value="NC_000964.3"/>
</dbReference>
<dbReference type="RefSeq" id="WP_003245216.1">
    <property type="nucleotide sequence ID" value="NZ_OZ025638.1"/>
</dbReference>
<dbReference type="PDB" id="1OR4">
    <property type="method" value="X-ray"/>
    <property type="resolution" value="2.15 A"/>
    <property type="chains" value="A/B=1-178"/>
</dbReference>
<dbReference type="PDB" id="1OR6">
    <property type="method" value="X-ray"/>
    <property type="resolution" value="2.71 A"/>
    <property type="chains" value="A/B=1-178"/>
</dbReference>
<dbReference type="PDBsum" id="1OR4"/>
<dbReference type="PDBsum" id="1OR6"/>
<dbReference type="SMR" id="O07621"/>
<dbReference type="FunCoup" id="O07621">
    <property type="interactions" value="23"/>
</dbReference>
<dbReference type="IntAct" id="O07621">
    <property type="interactions" value="3"/>
</dbReference>
<dbReference type="STRING" id="224308.BSU10380"/>
<dbReference type="jPOST" id="O07621"/>
<dbReference type="PaxDb" id="224308-BSU10380"/>
<dbReference type="EnsemblBacteria" id="CAB12878">
    <property type="protein sequence ID" value="CAB12878"/>
    <property type="gene ID" value="BSU_10380"/>
</dbReference>
<dbReference type="GeneID" id="936320"/>
<dbReference type="KEGG" id="bsu:BSU10380"/>
<dbReference type="PATRIC" id="fig|224308.179.peg.1116"/>
<dbReference type="eggNOG" id="COG0840">
    <property type="taxonomic scope" value="Bacteria"/>
</dbReference>
<dbReference type="InParanoid" id="O07621"/>
<dbReference type="OrthoDB" id="266313at2"/>
<dbReference type="PhylomeDB" id="O07621"/>
<dbReference type="BioCyc" id="BSUB:BSU10380-MONOMER"/>
<dbReference type="EvolutionaryTrace" id="O07621"/>
<dbReference type="Proteomes" id="UP000001570">
    <property type="component" value="Chromosome"/>
</dbReference>
<dbReference type="GO" id="GO:0016020">
    <property type="term" value="C:membrane"/>
    <property type="evidence" value="ECO:0007669"/>
    <property type="project" value="InterPro"/>
</dbReference>
<dbReference type="GO" id="GO:0020037">
    <property type="term" value="F:heme binding"/>
    <property type="evidence" value="ECO:0000314"/>
    <property type="project" value="UniProtKB"/>
</dbReference>
<dbReference type="GO" id="GO:0046872">
    <property type="term" value="F:metal ion binding"/>
    <property type="evidence" value="ECO:0007669"/>
    <property type="project" value="UniProtKB-KW"/>
</dbReference>
<dbReference type="GO" id="GO:0019825">
    <property type="term" value="F:oxygen binding"/>
    <property type="evidence" value="ECO:0007669"/>
    <property type="project" value="InterPro"/>
</dbReference>
<dbReference type="GO" id="GO:0009454">
    <property type="term" value="P:aerotaxis"/>
    <property type="evidence" value="ECO:0000314"/>
    <property type="project" value="UniProtKB"/>
</dbReference>
<dbReference type="GO" id="GO:0006935">
    <property type="term" value="P:chemotaxis"/>
    <property type="evidence" value="ECO:0000318"/>
    <property type="project" value="GO_Central"/>
</dbReference>
<dbReference type="GO" id="GO:0007165">
    <property type="term" value="P:signal transduction"/>
    <property type="evidence" value="ECO:0000314"/>
    <property type="project" value="UniProtKB"/>
</dbReference>
<dbReference type="CDD" id="cd01068">
    <property type="entry name" value="globin_sensor"/>
    <property type="match status" value="1"/>
</dbReference>
<dbReference type="CDD" id="cd11386">
    <property type="entry name" value="MCP_signal"/>
    <property type="match status" value="1"/>
</dbReference>
<dbReference type="FunFam" id="1.10.287.950:FF:000020">
    <property type="entry name" value="Heme-based aerotactic transducer HemAT"/>
    <property type="match status" value="1"/>
</dbReference>
<dbReference type="Gene3D" id="1.10.490.10">
    <property type="entry name" value="Globins"/>
    <property type="match status" value="1"/>
</dbReference>
<dbReference type="Gene3D" id="1.10.287.950">
    <property type="entry name" value="Methyl-accepting chemotaxis protein"/>
    <property type="match status" value="1"/>
</dbReference>
<dbReference type="InterPro" id="IPR009050">
    <property type="entry name" value="Globin-like_sf"/>
</dbReference>
<dbReference type="InterPro" id="IPR044398">
    <property type="entry name" value="Globin-sensor_dom"/>
</dbReference>
<dbReference type="InterPro" id="IPR012292">
    <property type="entry name" value="Globin/Proto"/>
</dbReference>
<dbReference type="InterPro" id="IPR004089">
    <property type="entry name" value="MCPsignal_dom"/>
</dbReference>
<dbReference type="InterPro" id="IPR039379">
    <property type="entry name" value="Protoglobin_sensor_dom"/>
</dbReference>
<dbReference type="PANTHER" id="PTHR32089:SF118">
    <property type="entry name" value="HEME-BASED AEROTACTIC TRANSDUCER HEMAT"/>
    <property type="match status" value="1"/>
</dbReference>
<dbReference type="PANTHER" id="PTHR32089">
    <property type="entry name" value="METHYL-ACCEPTING CHEMOTAXIS PROTEIN MCPB"/>
    <property type="match status" value="1"/>
</dbReference>
<dbReference type="Pfam" id="PF00015">
    <property type="entry name" value="MCPsignal"/>
    <property type="match status" value="1"/>
</dbReference>
<dbReference type="Pfam" id="PF11563">
    <property type="entry name" value="Protoglobin"/>
    <property type="match status" value="1"/>
</dbReference>
<dbReference type="SMART" id="SM00283">
    <property type="entry name" value="MA"/>
    <property type="match status" value="1"/>
</dbReference>
<dbReference type="SUPFAM" id="SSF46458">
    <property type="entry name" value="Globin-like"/>
    <property type="match status" value="1"/>
</dbReference>
<dbReference type="SUPFAM" id="SSF58104">
    <property type="entry name" value="Methyl-accepting chemotaxis protein (MCP) signaling domain"/>
    <property type="match status" value="1"/>
</dbReference>
<dbReference type="PROSITE" id="PS50111">
    <property type="entry name" value="CHEMOTAXIS_TRANSDUC_2"/>
    <property type="match status" value="1"/>
</dbReference>
<accession>O07621</accession>
<name>HEMAT_BACSU</name>
<protein>
    <recommendedName>
        <fullName>Heme-based aerotactic transducer HemAT</fullName>
    </recommendedName>
</protein>
<comment type="function">
    <text evidence="2">Heme-containing signal transducer responsible for aerotaxis, the migratory response toward or away from oxygen.</text>
</comment>
<comment type="subunit">
    <text evidence="4">Homotetramer.</text>
</comment>
<comment type="similarity">
    <text evidence="3">Belongs to the methyl-accepting chemotaxis (MCP) protein family.</text>
</comment>
<gene>
    <name type="primary">hemAT</name>
    <name type="synonym">yhfV</name>
    <name type="ordered locus">BSU10380</name>
</gene>
<reference key="1">
    <citation type="journal article" date="1998" name="Microbiology">
        <title>The 172 kb prkA-addAB region from 83 degrees to 97 degrees of the Bacillus subtilis chromosome contains several dysfunctional genes, the glyB marker, many genes encoding transporter proteins, and the ubiquitous hit gene.</title>
        <authorList>
            <person name="Noback M.A."/>
            <person name="Holsappel S."/>
            <person name="Kiewiet R."/>
            <person name="Terpstra P."/>
            <person name="Wambutt R."/>
            <person name="Wedler H."/>
            <person name="Venema G."/>
            <person name="Bron S."/>
        </authorList>
    </citation>
    <scope>NUCLEOTIDE SEQUENCE [GENOMIC DNA]</scope>
    <source>
        <strain>168</strain>
    </source>
</reference>
<reference key="2">
    <citation type="journal article" date="1997" name="Nature">
        <title>The complete genome sequence of the Gram-positive bacterium Bacillus subtilis.</title>
        <authorList>
            <person name="Kunst F."/>
            <person name="Ogasawara N."/>
            <person name="Moszer I."/>
            <person name="Albertini A.M."/>
            <person name="Alloni G."/>
            <person name="Azevedo V."/>
            <person name="Bertero M.G."/>
            <person name="Bessieres P."/>
            <person name="Bolotin A."/>
            <person name="Borchert S."/>
            <person name="Borriss R."/>
            <person name="Boursier L."/>
            <person name="Brans A."/>
            <person name="Braun M."/>
            <person name="Brignell S.C."/>
            <person name="Bron S."/>
            <person name="Brouillet S."/>
            <person name="Bruschi C.V."/>
            <person name="Caldwell B."/>
            <person name="Capuano V."/>
            <person name="Carter N.M."/>
            <person name="Choi S.-K."/>
            <person name="Codani J.-J."/>
            <person name="Connerton I.F."/>
            <person name="Cummings N.J."/>
            <person name="Daniel R.A."/>
            <person name="Denizot F."/>
            <person name="Devine K.M."/>
            <person name="Duesterhoeft A."/>
            <person name="Ehrlich S.D."/>
            <person name="Emmerson P.T."/>
            <person name="Entian K.-D."/>
            <person name="Errington J."/>
            <person name="Fabret C."/>
            <person name="Ferrari E."/>
            <person name="Foulger D."/>
            <person name="Fritz C."/>
            <person name="Fujita M."/>
            <person name="Fujita Y."/>
            <person name="Fuma S."/>
            <person name="Galizzi A."/>
            <person name="Galleron N."/>
            <person name="Ghim S.-Y."/>
            <person name="Glaser P."/>
            <person name="Goffeau A."/>
            <person name="Golightly E.J."/>
            <person name="Grandi G."/>
            <person name="Guiseppi G."/>
            <person name="Guy B.J."/>
            <person name="Haga K."/>
            <person name="Haiech J."/>
            <person name="Harwood C.R."/>
            <person name="Henaut A."/>
            <person name="Hilbert H."/>
            <person name="Holsappel S."/>
            <person name="Hosono S."/>
            <person name="Hullo M.-F."/>
            <person name="Itaya M."/>
            <person name="Jones L.-M."/>
            <person name="Joris B."/>
            <person name="Karamata D."/>
            <person name="Kasahara Y."/>
            <person name="Klaerr-Blanchard M."/>
            <person name="Klein C."/>
            <person name="Kobayashi Y."/>
            <person name="Koetter P."/>
            <person name="Koningstein G."/>
            <person name="Krogh S."/>
            <person name="Kumano M."/>
            <person name="Kurita K."/>
            <person name="Lapidus A."/>
            <person name="Lardinois S."/>
            <person name="Lauber J."/>
            <person name="Lazarevic V."/>
            <person name="Lee S.-M."/>
            <person name="Levine A."/>
            <person name="Liu H."/>
            <person name="Masuda S."/>
            <person name="Mauel C."/>
            <person name="Medigue C."/>
            <person name="Medina N."/>
            <person name="Mellado R.P."/>
            <person name="Mizuno M."/>
            <person name="Moestl D."/>
            <person name="Nakai S."/>
            <person name="Noback M."/>
            <person name="Noone D."/>
            <person name="O'Reilly M."/>
            <person name="Ogawa K."/>
            <person name="Ogiwara A."/>
            <person name="Oudega B."/>
            <person name="Park S.-H."/>
            <person name="Parro V."/>
            <person name="Pohl T.M."/>
            <person name="Portetelle D."/>
            <person name="Porwollik S."/>
            <person name="Prescott A.M."/>
            <person name="Presecan E."/>
            <person name="Pujic P."/>
            <person name="Purnelle B."/>
            <person name="Rapoport G."/>
            <person name="Rey M."/>
            <person name="Reynolds S."/>
            <person name="Rieger M."/>
            <person name="Rivolta C."/>
            <person name="Rocha E."/>
            <person name="Roche B."/>
            <person name="Rose M."/>
            <person name="Sadaie Y."/>
            <person name="Sato T."/>
            <person name="Scanlan E."/>
            <person name="Schleich S."/>
            <person name="Schroeter R."/>
            <person name="Scoffone F."/>
            <person name="Sekiguchi J."/>
            <person name="Sekowska A."/>
            <person name="Seror S.J."/>
            <person name="Serror P."/>
            <person name="Shin B.-S."/>
            <person name="Soldo B."/>
            <person name="Sorokin A."/>
            <person name="Tacconi E."/>
            <person name="Takagi T."/>
            <person name="Takahashi H."/>
            <person name="Takemaru K."/>
            <person name="Takeuchi M."/>
            <person name="Tamakoshi A."/>
            <person name="Tanaka T."/>
            <person name="Terpstra P."/>
            <person name="Tognoni A."/>
            <person name="Tosato V."/>
            <person name="Uchiyama S."/>
            <person name="Vandenbol M."/>
            <person name="Vannier F."/>
            <person name="Vassarotti A."/>
            <person name="Viari A."/>
            <person name="Wambutt R."/>
            <person name="Wedler E."/>
            <person name="Wedler H."/>
            <person name="Weitzenegger T."/>
            <person name="Winters P."/>
            <person name="Wipat A."/>
            <person name="Yamamoto H."/>
            <person name="Yamane K."/>
            <person name="Yasumoto K."/>
            <person name="Yata K."/>
            <person name="Yoshida K."/>
            <person name="Yoshikawa H.-F."/>
            <person name="Zumstein E."/>
            <person name="Yoshikawa H."/>
            <person name="Danchin A."/>
        </authorList>
    </citation>
    <scope>NUCLEOTIDE SEQUENCE [LARGE SCALE GENOMIC DNA]</scope>
    <source>
        <strain>168</strain>
    </source>
</reference>
<reference key="3">
    <citation type="journal article" date="2000" name="Nature">
        <title>Myoglobin-like aerotaxis transducers in Archaea and Bacteria.</title>
        <authorList>
            <person name="Hou S."/>
            <person name="Larsen R.W."/>
            <person name="Boudko D."/>
            <person name="Riley C.W."/>
            <person name="Karatan E."/>
            <person name="Zimmer M."/>
            <person name="Ordal G.W."/>
            <person name="Alam M."/>
        </authorList>
    </citation>
    <scope>FUNCTION</scope>
</reference>
<reference key="4">
    <citation type="journal article" date="2002" name="J. Biol. Chem.">
        <title>Resonance Raman and ligand binding studies of the oxygen-sensing signal transducer protein HemAT from Bacillus subtilis.</title>
        <authorList>
            <person name="Aono S."/>
            <person name="Kato T."/>
            <person name="Matsuki M."/>
            <person name="Nakajima H."/>
            <person name="Ohta T."/>
            <person name="Uchida T."/>
            <person name="Kitagawa T."/>
        </authorList>
    </citation>
    <scope>RESONANCE RAMAN SPECTROSCOPY</scope>
    <scope>SUBUNIT</scope>
</reference>
<organism>
    <name type="scientific">Bacillus subtilis (strain 168)</name>
    <dbReference type="NCBI Taxonomy" id="224308"/>
    <lineage>
        <taxon>Bacteria</taxon>
        <taxon>Bacillati</taxon>
        <taxon>Bacillota</taxon>
        <taxon>Bacilli</taxon>
        <taxon>Bacillales</taxon>
        <taxon>Bacillaceae</taxon>
        <taxon>Bacillus</taxon>
    </lineage>
</organism>
<feature type="chain" id="PRO_0000110567" description="Heme-based aerotactic transducer HemAT">
    <location>
        <begin position="1"/>
        <end position="432"/>
    </location>
</feature>
<feature type="domain" description="Methyl-accepting transducer" evidence="1">
    <location>
        <begin position="184"/>
        <end position="420"/>
    </location>
</feature>
<feature type="helix" evidence="5">
    <location>
        <begin position="18"/>
        <end position="21"/>
    </location>
</feature>
<feature type="helix" evidence="5">
    <location>
        <begin position="29"/>
        <end position="31"/>
    </location>
</feature>
<feature type="helix" evidence="5">
    <location>
        <begin position="32"/>
        <end position="40"/>
    </location>
</feature>
<feature type="helix" evidence="5">
    <location>
        <begin position="45"/>
        <end position="73"/>
    </location>
</feature>
<feature type="helix" evidence="5">
    <location>
        <begin position="77"/>
        <end position="86"/>
    </location>
</feature>
<feature type="helix" evidence="5">
    <location>
        <begin position="89"/>
        <end position="102"/>
    </location>
</feature>
<feature type="helix" evidence="5">
    <location>
        <begin position="110"/>
        <end position="125"/>
    </location>
</feature>
<feature type="helix" evidence="5">
    <location>
        <begin position="130"/>
        <end position="151"/>
    </location>
</feature>
<feature type="helix" evidence="5">
    <location>
        <begin position="155"/>
        <end position="176"/>
    </location>
</feature>